<evidence type="ECO:0000255" key="1">
    <source>
        <dbReference type="HAMAP-Rule" id="MF_00244"/>
    </source>
</evidence>
<comment type="function">
    <text evidence="1">Catalyzes the reversible adenylation of nicotinate mononucleotide (NaMN) to nicotinic acid adenine dinucleotide (NaAD).</text>
</comment>
<comment type="catalytic activity">
    <reaction evidence="1">
        <text>nicotinate beta-D-ribonucleotide + ATP + H(+) = deamido-NAD(+) + diphosphate</text>
        <dbReference type="Rhea" id="RHEA:22860"/>
        <dbReference type="ChEBI" id="CHEBI:15378"/>
        <dbReference type="ChEBI" id="CHEBI:30616"/>
        <dbReference type="ChEBI" id="CHEBI:33019"/>
        <dbReference type="ChEBI" id="CHEBI:57502"/>
        <dbReference type="ChEBI" id="CHEBI:58437"/>
        <dbReference type="EC" id="2.7.7.18"/>
    </reaction>
</comment>
<comment type="pathway">
    <text evidence="1">Cofactor biosynthesis; NAD(+) biosynthesis; deamido-NAD(+) from nicotinate D-ribonucleotide: step 1/1.</text>
</comment>
<comment type="similarity">
    <text evidence="1">Belongs to the NadD family.</text>
</comment>
<feature type="chain" id="PRO_1000071838" description="Probable nicotinate-nucleotide adenylyltransferase">
    <location>
        <begin position="1"/>
        <end position="204"/>
    </location>
</feature>
<accession>Q3ZW88</accession>
<dbReference type="EC" id="2.7.7.18" evidence="1"/>
<dbReference type="EMBL" id="AJ965256">
    <property type="protein sequence ID" value="CAI82282.1"/>
    <property type="molecule type" value="Genomic_DNA"/>
</dbReference>
<dbReference type="RefSeq" id="WP_011308641.1">
    <property type="nucleotide sequence ID" value="NC_007356.1"/>
</dbReference>
<dbReference type="SMR" id="Q3ZW88"/>
<dbReference type="KEGG" id="deh:cbdbA3"/>
<dbReference type="HOGENOM" id="CLU_069765_1_1_0"/>
<dbReference type="UniPathway" id="UPA00253">
    <property type="reaction ID" value="UER00332"/>
</dbReference>
<dbReference type="Proteomes" id="UP000000433">
    <property type="component" value="Chromosome"/>
</dbReference>
<dbReference type="GO" id="GO:0005524">
    <property type="term" value="F:ATP binding"/>
    <property type="evidence" value="ECO:0007669"/>
    <property type="project" value="UniProtKB-KW"/>
</dbReference>
<dbReference type="GO" id="GO:0004515">
    <property type="term" value="F:nicotinate-nucleotide adenylyltransferase activity"/>
    <property type="evidence" value="ECO:0007669"/>
    <property type="project" value="UniProtKB-UniRule"/>
</dbReference>
<dbReference type="GO" id="GO:0009435">
    <property type="term" value="P:NAD biosynthetic process"/>
    <property type="evidence" value="ECO:0007669"/>
    <property type="project" value="UniProtKB-UniRule"/>
</dbReference>
<dbReference type="CDD" id="cd02165">
    <property type="entry name" value="NMNAT"/>
    <property type="match status" value="1"/>
</dbReference>
<dbReference type="Gene3D" id="3.40.50.620">
    <property type="entry name" value="HUPs"/>
    <property type="match status" value="1"/>
</dbReference>
<dbReference type="HAMAP" id="MF_00244">
    <property type="entry name" value="NaMN_adenylyltr"/>
    <property type="match status" value="1"/>
</dbReference>
<dbReference type="InterPro" id="IPR004821">
    <property type="entry name" value="Cyt_trans-like"/>
</dbReference>
<dbReference type="InterPro" id="IPR005248">
    <property type="entry name" value="NadD/NMNAT"/>
</dbReference>
<dbReference type="InterPro" id="IPR014729">
    <property type="entry name" value="Rossmann-like_a/b/a_fold"/>
</dbReference>
<dbReference type="NCBIfam" id="TIGR00125">
    <property type="entry name" value="cyt_tran_rel"/>
    <property type="match status" value="1"/>
</dbReference>
<dbReference type="NCBIfam" id="TIGR00482">
    <property type="entry name" value="nicotinate (nicotinamide) nucleotide adenylyltransferase"/>
    <property type="match status" value="1"/>
</dbReference>
<dbReference type="NCBIfam" id="NF000840">
    <property type="entry name" value="PRK00071.1-3"/>
    <property type="match status" value="1"/>
</dbReference>
<dbReference type="PANTHER" id="PTHR39321">
    <property type="entry name" value="NICOTINATE-NUCLEOTIDE ADENYLYLTRANSFERASE-RELATED"/>
    <property type="match status" value="1"/>
</dbReference>
<dbReference type="PANTHER" id="PTHR39321:SF3">
    <property type="entry name" value="PHOSPHOPANTETHEINE ADENYLYLTRANSFERASE"/>
    <property type="match status" value="1"/>
</dbReference>
<dbReference type="Pfam" id="PF01467">
    <property type="entry name" value="CTP_transf_like"/>
    <property type="match status" value="1"/>
</dbReference>
<dbReference type="SUPFAM" id="SSF52374">
    <property type="entry name" value="Nucleotidylyl transferase"/>
    <property type="match status" value="1"/>
</dbReference>
<name>NADD_DEHMC</name>
<gene>
    <name evidence="1" type="primary">nadD</name>
    <name type="ordered locus">cbdbA3</name>
</gene>
<keyword id="KW-0067">ATP-binding</keyword>
<keyword id="KW-0520">NAD</keyword>
<keyword id="KW-0547">Nucleotide-binding</keyword>
<keyword id="KW-0548">Nucleotidyltransferase</keyword>
<keyword id="KW-0662">Pyridine nucleotide biosynthesis</keyword>
<keyword id="KW-0808">Transferase</keyword>
<organism>
    <name type="scientific">Dehalococcoides mccartyi (strain CBDB1)</name>
    <dbReference type="NCBI Taxonomy" id="255470"/>
    <lineage>
        <taxon>Bacteria</taxon>
        <taxon>Bacillati</taxon>
        <taxon>Chloroflexota</taxon>
        <taxon>Dehalococcoidia</taxon>
        <taxon>Dehalococcoidales</taxon>
        <taxon>Dehalococcoidaceae</taxon>
        <taxon>Dehalococcoides</taxon>
    </lineage>
</organism>
<sequence>MVSLKTGILGGTFDPIHTGHLILADEVKNRLGLDEVIFIPTGQPYYKADKTISPAEDRLNMVKLAISDKPYFRVMDIEIKRSGPTYTADTLNDLKTILPEKTELYFMLGWDNLEALPRWHKASEIIRLCRLVAAPRIGQVKPDVDELDDKLPGLQQSLILLSKPEVDISSSLVRERVENGQGVEHLVPAAVASYIKEHNLYCRK</sequence>
<reference key="1">
    <citation type="journal article" date="2005" name="Nat. Biotechnol.">
        <title>Genome sequence of the chlorinated compound-respiring bacterium Dehalococcoides species strain CBDB1.</title>
        <authorList>
            <person name="Kube M."/>
            <person name="Beck A."/>
            <person name="Zinder S.H."/>
            <person name="Kuhl H."/>
            <person name="Reinhardt R."/>
            <person name="Adrian L."/>
        </authorList>
    </citation>
    <scope>NUCLEOTIDE SEQUENCE [LARGE SCALE GENOMIC DNA]</scope>
    <source>
        <strain>CBDB1</strain>
    </source>
</reference>
<proteinExistence type="inferred from homology"/>
<protein>
    <recommendedName>
        <fullName evidence="1">Probable nicotinate-nucleotide adenylyltransferase</fullName>
        <ecNumber evidence="1">2.7.7.18</ecNumber>
    </recommendedName>
    <alternativeName>
        <fullName evidence="1">Deamido-NAD(+) diphosphorylase</fullName>
    </alternativeName>
    <alternativeName>
        <fullName evidence="1">Deamido-NAD(+) pyrophosphorylase</fullName>
    </alternativeName>
    <alternativeName>
        <fullName evidence="1">Nicotinate mononucleotide adenylyltransferase</fullName>
        <shortName evidence="1">NaMN adenylyltransferase</shortName>
    </alternativeName>
</protein>